<name>HIS8_STAEQ</name>
<gene>
    <name evidence="1" type="primary">hisC</name>
    <name type="ordered locus">SERP0387</name>
</gene>
<comment type="catalytic activity">
    <reaction evidence="1">
        <text>L-histidinol phosphate + 2-oxoglutarate = 3-(imidazol-4-yl)-2-oxopropyl phosphate + L-glutamate</text>
        <dbReference type="Rhea" id="RHEA:23744"/>
        <dbReference type="ChEBI" id="CHEBI:16810"/>
        <dbReference type="ChEBI" id="CHEBI:29985"/>
        <dbReference type="ChEBI" id="CHEBI:57766"/>
        <dbReference type="ChEBI" id="CHEBI:57980"/>
        <dbReference type="EC" id="2.6.1.9"/>
    </reaction>
</comment>
<comment type="cofactor">
    <cofactor evidence="1">
        <name>pyridoxal 5'-phosphate</name>
        <dbReference type="ChEBI" id="CHEBI:597326"/>
    </cofactor>
</comment>
<comment type="pathway">
    <text evidence="1">Amino-acid biosynthesis; L-histidine biosynthesis; L-histidine from 5-phospho-alpha-D-ribose 1-diphosphate: step 7/9.</text>
</comment>
<comment type="subunit">
    <text evidence="1">Homodimer.</text>
</comment>
<comment type="similarity">
    <text evidence="1">Belongs to the class-II pyridoxal-phosphate-dependent aminotransferase family. Histidinol-phosphate aminotransferase subfamily.</text>
</comment>
<accession>Q5HR08</accession>
<dbReference type="EC" id="2.6.1.9" evidence="1"/>
<dbReference type="EMBL" id="CP000029">
    <property type="protein sequence ID" value="AAW53768.1"/>
    <property type="molecule type" value="Genomic_DNA"/>
</dbReference>
<dbReference type="RefSeq" id="WP_001829653.1">
    <property type="nucleotide sequence ID" value="NC_002976.3"/>
</dbReference>
<dbReference type="SMR" id="Q5HR08"/>
<dbReference type="STRING" id="176279.SERP0387"/>
<dbReference type="GeneID" id="50019348"/>
<dbReference type="KEGG" id="ser:SERP0387"/>
<dbReference type="eggNOG" id="COG0079">
    <property type="taxonomic scope" value="Bacteria"/>
</dbReference>
<dbReference type="HOGENOM" id="CLU_017584_3_3_9"/>
<dbReference type="UniPathway" id="UPA00031">
    <property type="reaction ID" value="UER00012"/>
</dbReference>
<dbReference type="Proteomes" id="UP000000531">
    <property type="component" value="Chromosome"/>
</dbReference>
<dbReference type="GO" id="GO:0004400">
    <property type="term" value="F:histidinol-phosphate transaminase activity"/>
    <property type="evidence" value="ECO:0007669"/>
    <property type="project" value="UniProtKB-UniRule"/>
</dbReference>
<dbReference type="GO" id="GO:0030170">
    <property type="term" value="F:pyridoxal phosphate binding"/>
    <property type="evidence" value="ECO:0007669"/>
    <property type="project" value="InterPro"/>
</dbReference>
<dbReference type="GO" id="GO:0000105">
    <property type="term" value="P:L-histidine biosynthetic process"/>
    <property type="evidence" value="ECO:0007669"/>
    <property type="project" value="UniProtKB-UniRule"/>
</dbReference>
<dbReference type="CDD" id="cd00609">
    <property type="entry name" value="AAT_like"/>
    <property type="match status" value="1"/>
</dbReference>
<dbReference type="Gene3D" id="3.90.1150.10">
    <property type="entry name" value="Aspartate Aminotransferase, domain 1"/>
    <property type="match status" value="1"/>
</dbReference>
<dbReference type="Gene3D" id="3.40.640.10">
    <property type="entry name" value="Type I PLP-dependent aspartate aminotransferase-like (Major domain)"/>
    <property type="match status" value="1"/>
</dbReference>
<dbReference type="HAMAP" id="MF_01023">
    <property type="entry name" value="HisC_aminotrans_2"/>
    <property type="match status" value="1"/>
</dbReference>
<dbReference type="InterPro" id="IPR001917">
    <property type="entry name" value="Aminotrans_II_pyridoxalP_BS"/>
</dbReference>
<dbReference type="InterPro" id="IPR004839">
    <property type="entry name" value="Aminotransferase_I/II_large"/>
</dbReference>
<dbReference type="InterPro" id="IPR005861">
    <property type="entry name" value="HisP_aminotrans"/>
</dbReference>
<dbReference type="InterPro" id="IPR050106">
    <property type="entry name" value="HistidinolP_aminotransfase"/>
</dbReference>
<dbReference type="InterPro" id="IPR015424">
    <property type="entry name" value="PyrdxlP-dep_Trfase"/>
</dbReference>
<dbReference type="InterPro" id="IPR015421">
    <property type="entry name" value="PyrdxlP-dep_Trfase_major"/>
</dbReference>
<dbReference type="InterPro" id="IPR015422">
    <property type="entry name" value="PyrdxlP-dep_Trfase_small"/>
</dbReference>
<dbReference type="NCBIfam" id="TIGR01141">
    <property type="entry name" value="hisC"/>
    <property type="match status" value="1"/>
</dbReference>
<dbReference type="PANTHER" id="PTHR43643:SF3">
    <property type="entry name" value="HISTIDINOL-PHOSPHATE AMINOTRANSFERASE"/>
    <property type="match status" value="1"/>
</dbReference>
<dbReference type="PANTHER" id="PTHR43643">
    <property type="entry name" value="HISTIDINOL-PHOSPHATE AMINOTRANSFERASE 2"/>
    <property type="match status" value="1"/>
</dbReference>
<dbReference type="Pfam" id="PF00155">
    <property type="entry name" value="Aminotran_1_2"/>
    <property type="match status" value="1"/>
</dbReference>
<dbReference type="SUPFAM" id="SSF53383">
    <property type="entry name" value="PLP-dependent transferases"/>
    <property type="match status" value="1"/>
</dbReference>
<dbReference type="PROSITE" id="PS00599">
    <property type="entry name" value="AA_TRANSFER_CLASS_2"/>
    <property type="match status" value="1"/>
</dbReference>
<reference key="1">
    <citation type="journal article" date="2005" name="J. Bacteriol.">
        <title>Insights on evolution of virulence and resistance from the complete genome analysis of an early methicillin-resistant Staphylococcus aureus strain and a biofilm-producing methicillin-resistant Staphylococcus epidermidis strain.</title>
        <authorList>
            <person name="Gill S.R."/>
            <person name="Fouts D.E."/>
            <person name="Archer G.L."/>
            <person name="Mongodin E.F."/>
            <person name="DeBoy R.T."/>
            <person name="Ravel J."/>
            <person name="Paulsen I.T."/>
            <person name="Kolonay J.F."/>
            <person name="Brinkac L.M."/>
            <person name="Beanan M.J."/>
            <person name="Dodson R.J."/>
            <person name="Daugherty S.C."/>
            <person name="Madupu R."/>
            <person name="Angiuoli S.V."/>
            <person name="Durkin A.S."/>
            <person name="Haft D.H."/>
            <person name="Vamathevan J.J."/>
            <person name="Khouri H."/>
            <person name="Utterback T.R."/>
            <person name="Lee C."/>
            <person name="Dimitrov G."/>
            <person name="Jiang L."/>
            <person name="Qin H."/>
            <person name="Weidman J."/>
            <person name="Tran K."/>
            <person name="Kang K.H."/>
            <person name="Hance I.R."/>
            <person name="Nelson K.E."/>
            <person name="Fraser C.M."/>
        </authorList>
    </citation>
    <scope>NUCLEOTIDE SEQUENCE [LARGE SCALE GENOMIC DNA]</scope>
    <source>
        <strain>ATCC 35984 / DSM 28319 / BCRC 17069 / CCUG 31568 / BM 3577 / RP62A</strain>
    </source>
</reference>
<keyword id="KW-0028">Amino-acid biosynthesis</keyword>
<keyword id="KW-0032">Aminotransferase</keyword>
<keyword id="KW-0368">Histidine biosynthesis</keyword>
<keyword id="KW-0663">Pyridoxal phosphate</keyword>
<keyword id="KW-1185">Reference proteome</keyword>
<keyword id="KW-0808">Transferase</keyword>
<evidence type="ECO:0000255" key="1">
    <source>
        <dbReference type="HAMAP-Rule" id="MF_01023"/>
    </source>
</evidence>
<proteinExistence type="inferred from homology"/>
<feature type="chain" id="PRO_0000153458" description="Histidinol-phosphate aminotransferase">
    <location>
        <begin position="1"/>
        <end position="351"/>
    </location>
</feature>
<feature type="modified residue" description="N6-(pyridoxal phosphate)lysine" evidence="1">
    <location>
        <position position="221"/>
    </location>
</feature>
<organism>
    <name type="scientific">Staphylococcus epidermidis (strain ATCC 35984 / DSM 28319 / BCRC 17069 / CCUG 31568 / BM 3577 / RP62A)</name>
    <dbReference type="NCBI Taxonomy" id="176279"/>
    <lineage>
        <taxon>Bacteria</taxon>
        <taxon>Bacillati</taxon>
        <taxon>Bacillota</taxon>
        <taxon>Bacilli</taxon>
        <taxon>Bacillales</taxon>
        <taxon>Staphylococcaceae</taxon>
        <taxon>Staphylococcus</taxon>
    </lineage>
</organism>
<protein>
    <recommendedName>
        <fullName evidence="1">Histidinol-phosphate aminotransferase</fullName>
        <ecNumber evidence="1">2.6.1.9</ecNumber>
    </recommendedName>
    <alternativeName>
        <fullName evidence="1">Imidazole acetol-phosphate transaminase</fullName>
    </alternativeName>
</protein>
<sequence>MKKQLDQLTAYTPGLSPESLKKQYGIKGELHKLASNENVYGPSPKVKTAIQSHLDELYYYPESGSPKLREAISQQLNVDASRILFGAGLDEVILMISRAVLSPGDKIITSESTFGQYYHNAIVESADVIQVPLKDGGFDLDGMLQQIDNKTSLIWLCNPNNPTGTYFSHDELFNFLKRVPSDIPVLIDEAYVEFVTADDFPDTLKLQEDFDNAFLLRTFSKAYGLAGLRVGYVIASEDAIEKWNIIRPPFNVTRISEYAAIAALEDQEYLKEVTQKNSFERDKFYQIPQSQHFLPSQANFVFVKTSRSQALYDALLNVGCITRLFPNGVRITIGLPEQNNKMIEVLKHFEY</sequence>